<keyword id="KW-0963">Cytoplasm</keyword>
<organism>
    <name type="scientific">Saccharomyces cerevisiae (strain JAY291)</name>
    <name type="common">Baker's yeast</name>
    <dbReference type="NCBI Taxonomy" id="574961"/>
    <lineage>
        <taxon>Eukaryota</taxon>
        <taxon>Fungi</taxon>
        <taxon>Dikarya</taxon>
        <taxon>Ascomycota</taxon>
        <taxon>Saccharomycotina</taxon>
        <taxon>Saccharomycetes</taxon>
        <taxon>Saccharomycetales</taxon>
        <taxon>Saccharomycetaceae</taxon>
        <taxon>Saccharomyces</taxon>
    </lineage>
</organism>
<evidence type="ECO:0000250" key="1"/>
<evidence type="ECO:0000255" key="2">
    <source>
        <dbReference type="PROSITE-ProRule" id="PRU01234"/>
    </source>
</evidence>
<evidence type="ECO:0000305" key="3"/>
<protein>
    <recommendedName>
        <fullName>Restriction of telomere capping protein 5</fullName>
    </recommendedName>
</protein>
<feature type="chain" id="PRO_0000408852" description="Restriction of telomere capping protein 5">
    <location>
        <begin position="1"/>
        <end position="567"/>
    </location>
</feature>
<feature type="domain" description="TLDc" evidence="2">
    <location>
        <begin position="289"/>
        <end position="515"/>
    </location>
</feature>
<gene>
    <name type="primary">RTC5</name>
    <name type="ORF">C1Q_01511</name>
</gene>
<name>RTC5_YEAS2</name>
<sequence length="567" mass="64294">MGQSSSISSSNEEGSSHSKKFTNSKDILAYFNNKAQQQVTIPELVSFKGNLQIEDLNTPISHKALCNSLYFPQNHAMIVGIVTNMLRVLSNFPLMKSSYEPITGYGLLKCILLLNRARCAKFLKTKSYDQLKLLFISLSLQKTDKEELSEESENDGNKELTIKQIITGFDDVDTEMLCIPADFMLQFLTWLLILTVDCPTTNSKLDNTETHDQWGNFKVSALNLLRTMNPDVVGDIESHSITFQQFSTAIRTVMPNLLKPLENLMEHFFYLQHDLVDHDTNLSSIQDSKVMTPALLAQLSTGLPKELFIHKLQSLYIGRKSGFSMRSLQAKVFKWMAPSILVVSGMRITNSEEYAAEKNPRYRHFLEEFPKLKESDQMMDASHLNKRKTTFAVYIDDPWKVTNKDYFGDLNTRIIEISPRQDIYKVNQKGTIYFNTIGGGIGIGDKQPLIKPASKRYIPGNVSLTFDSTLEFAVFRNTGYGGSLDPGLLSMERKEENSPYELHFLIQDVEVWGCGGEKELEEQIKQLEWEEAESKRRQQINLRSLGEDRALLEMAGLVGQHQGGGSM</sequence>
<dbReference type="EMBL" id="ACFL01000063">
    <property type="protein sequence ID" value="EEU07941.1"/>
    <property type="molecule type" value="Genomic_DNA"/>
</dbReference>
<dbReference type="SMR" id="C7GML8"/>
<dbReference type="TopDownProteomics" id="C7GML8"/>
<dbReference type="Proteomes" id="UP000008073">
    <property type="component" value="Unassembled WGS sequence"/>
</dbReference>
<dbReference type="GO" id="GO:0005737">
    <property type="term" value="C:cytoplasm"/>
    <property type="evidence" value="ECO:0007669"/>
    <property type="project" value="UniProtKB-SubCell"/>
</dbReference>
<dbReference type="GO" id="GO:0005634">
    <property type="term" value="C:nucleus"/>
    <property type="evidence" value="ECO:0007669"/>
    <property type="project" value="TreeGrafter"/>
</dbReference>
<dbReference type="GO" id="GO:0006979">
    <property type="term" value="P:response to oxidative stress"/>
    <property type="evidence" value="ECO:0007669"/>
    <property type="project" value="TreeGrafter"/>
</dbReference>
<dbReference type="InterPro" id="IPR006571">
    <property type="entry name" value="TLDc_dom"/>
</dbReference>
<dbReference type="PANTHER" id="PTHR23354">
    <property type="entry name" value="NUCLEOLAR PROTEIN 7/ESTROGEN RECEPTOR COACTIVATOR-RELATED"/>
    <property type="match status" value="1"/>
</dbReference>
<dbReference type="PANTHER" id="PTHR23354:SF130">
    <property type="entry name" value="RESTRICTION OF TELOMERE CAPPING PROTEIN 5"/>
    <property type="match status" value="1"/>
</dbReference>
<dbReference type="Pfam" id="PF07534">
    <property type="entry name" value="TLD"/>
    <property type="match status" value="1"/>
</dbReference>
<dbReference type="SMART" id="SM00584">
    <property type="entry name" value="TLDc"/>
    <property type="match status" value="1"/>
</dbReference>
<dbReference type="PROSITE" id="PS51886">
    <property type="entry name" value="TLDC"/>
    <property type="match status" value="1"/>
</dbReference>
<accession>C7GML8</accession>
<proteinExistence type="inferred from homology"/>
<reference key="1">
    <citation type="journal article" date="2009" name="Genome Res.">
        <title>Genome structure of a Saccharomyces cerevisiae strain widely used in bioethanol production.</title>
        <authorList>
            <person name="Argueso J.L."/>
            <person name="Carazzolle M.F."/>
            <person name="Mieczkowski P.A."/>
            <person name="Duarte F.M."/>
            <person name="Netto O.V.C."/>
            <person name="Missawa S.K."/>
            <person name="Galzerani F."/>
            <person name="Costa G.G.L."/>
            <person name="Vidal R.O."/>
            <person name="Noronha M.F."/>
            <person name="Dominska M."/>
            <person name="Andrietta M.G.S."/>
            <person name="Andrietta S.R."/>
            <person name="Cunha A.F."/>
            <person name="Gomes L.H."/>
            <person name="Tavares F.C.A."/>
            <person name="Alcarde A.R."/>
            <person name="Dietrich F.S."/>
            <person name="McCusker J.H."/>
            <person name="Petes T.D."/>
            <person name="Pereira G.A.G."/>
        </authorList>
    </citation>
    <scope>NUCLEOTIDE SEQUENCE [LARGE SCALE GENOMIC DNA]</scope>
    <source>
        <strain>JAY291</strain>
    </source>
</reference>
<comment type="function">
    <text evidence="1">May be involved in a process influencing telomere capping.</text>
</comment>
<comment type="subcellular location">
    <subcellularLocation>
        <location evidence="1">Cytoplasm</location>
    </subcellularLocation>
</comment>
<comment type="similarity">
    <text evidence="3">Belongs to the RTC5 family.</text>
</comment>